<name>CYAA_LACKL</name>
<sequence length="1839" mass="206896">MSSPTDAERVNMRREKHPQIEETFEEHVHNAMPKFKKHYALGITTHTNDEDDDPRDHRQRGIHNPNFIHSPNDPRPPLSQPIKPRFSVHGTASNASVFSHGDIAPVRKTSRAGSLFKRLAGKKSTTSLLGTEHQQRQQQQSSNSLVPAAGLRRKMSTFIHGGSGSQSNESRGTRSSIFFPSTSNSRRGSATSTMTSGSRSSHPPDTPPITSQQQEQQYDQQRQQRPETREQEQKPPTLSDMPIVSRSPSFFMLDTDLNNLSDITNIISATPKNTESDEVRSTGANKTLKYPKPPLSSHKSTSASDLSHHKAQWTAPESWDIEEDANKLLATKRKAKHHHHYHHPQHPRPPHRKHYSNFSKPIEDKAVVEKEQEPPEKCPQPISTDSNDAQGLEIAKPIDESSGIQHSASTQSVSSFSSGATGASGATGKQIGGDQETESTISTVGEDEEVTNLRSIDSEQTDDTSFSKFDEEYDKAEYQLEKYYNDFSDVDLNRRYAIRIFNIDDTFTTLSCTPNTTLQDMMPQLKRKFNVGQGSYQVSLKVGKLSKILRPTAKPILIQRRLLLLNGYLKSDPLHIMGIEDLSFIFSFVFHPVATSHLNYEQEQRLSRGDFVHVDLRNMDLTTPPIILYQHTSDIESLDVSNNANIFLPLDFIESAIKLSSLRMVNIRASKFPANVTDAYKLVSLDLERNFIKKVPDSIFKLNNLTIVNLQCNNLERLPPGFSKLKNLQLLDISSNKFVNYPEVINSCTNLLQIDLSYNKIHSLPVSINQLVKLAKMNLFNNRLTSVGDLSQMKNLRTLNLRCNRVTSIECHAPNLQNLFLTDNRISTFDDDLTRLRTLELQQNPITSMVCGGNYMANMTSLSLNKAKLSSFSAELLSKLPRLEKLELNENNLTQLPPEINKLTRLIYLSVARNKLESIPDEISDLRSLKSLDLHSNNLRMLMNNLEDLELTSLNVSSNLLTGFHGSPAKFFASPSPKLAKSLLFLSVADNNLTDSIWPLVNTFQNLKTLNLSYNNFVEISDLKLQNLTELYLSGNNFTSLPGEAVQHLRSLKVLMLNGNKLLSLPAELSQLSRLSVLDVGSNQLKYNISNYHYDWNWRNNKDLKYLNFSGNKRFEIKSALDPEGKNDLSDLGILKQLRVLGLMDVTLKTSKVPDESVSIRLRTTASMINGMRYGVADTLGQSDSVCSRDVTFERFRGREDECLICLYDGKNENASSGHKISKIIRDIYDKILIRLLEKYGEESDGIKRALRYSFLQLNKEINGMLVSVEDGNTDSGLTSADLLSGSSATVVYLKGKKIYTANIGDTMAVLSKNNGDFVTLTKLHVPAEREEYERIRTSGGYVNNQKLDGVSEVSRAVGFFDLLPHIHASPDISETVLSYSDEMLIIATHKLWEYLDYETVCDISRENKSQPMSAAEKMKDYAISYGCSDNITILCVSLDKSVNQQSQFTLNREDLISRKNTFEDTVLRRLQPEIAPPTGNVAIVFTDIKNSTFLWELFPDAMRAAIKTHNDIMRRQLRIYGGYEVKTEGDAFMVAFPTPTSALVWCLSVQLKLLEAEWPEEITSIQDGCLITDNSGTKVYLGLSVRMGVHWGCPVPEIDLVTQRMDYLGPVVNKAARVSGVADGGQITLSSDFCSEFKKIMKFHKRVVENQEPLKEVYGEDFIGEVLEREIHMLENVGWVFKDLGEQKLKGLETKEFITIAYPKTLASRHDLATKNQNSSVLNDDLLFQLRTISNKLENILSSINGGLIESETPGNSSIYMTFDKNTKDAVITKSTESDWISFLDHLVTRVESTVAILQLRQKLQGGLELYTSSDSTMHKSVFELLDEILKIQTDQKQ</sequence>
<feature type="chain" id="PRO_0000195732" description="Adenylate cyclase">
    <location>
        <begin position="1"/>
        <end position="1839"/>
    </location>
</feature>
<feature type="domain" description="Ras-associating" evidence="4">
    <location>
        <begin position="494"/>
        <end position="574"/>
    </location>
</feature>
<feature type="repeat" description="LRR 1">
    <location>
        <begin position="632"/>
        <end position="655"/>
    </location>
</feature>
<feature type="repeat" description="LRR 2">
    <location>
        <begin position="659"/>
        <end position="679"/>
    </location>
</feature>
<feature type="repeat" description="LRR 3">
    <location>
        <begin position="681"/>
        <end position="702"/>
    </location>
</feature>
<feature type="repeat" description="LRR 4">
    <location>
        <begin position="704"/>
        <end position="726"/>
    </location>
</feature>
<feature type="repeat" description="LRR 5">
    <location>
        <begin position="727"/>
        <end position="748"/>
    </location>
</feature>
<feature type="repeat" description="LRR 6">
    <location>
        <begin position="750"/>
        <end position="771"/>
    </location>
</feature>
<feature type="repeat" description="LRR 7">
    <location>
        <begin position="773"/>
        <end position="794"/>
    </location>
</feature>
<feature type="repeat" description="LRR 8">
    <location>
        <begin position="795"/>
        <end position="816"/>
    </location>
</feature>
<feature type="repeat" description="LRR 9">
    <location>
        <begin position="817"/>
        <end position="834"/>
    </location>
</feature>
<feature type="repeat" description="LRR 10">
    <location>
        <begin position="835"/>
        <end position="856"/>
    </location>
</feature>
<feature type="repeat" description="LRR 11">
    <location>
        <begin position="858"/>
        <end position="879"/>
    </location>
</feature>
<feature type="repeat" description="LRR 12">
    <location>
        <begin position="882"/>
        <end position="903"/>
    </location>
</feature>
<feature type="repeat" description="LRR 13">
    <location>
        <begin position="905"/>
        <end position="926"/>
    </location>
</feature>
<feature type="repeat" description="LRR 14">
    <location>
        <begin position="928"/>
        <end position="950"/>
    </location>
</feature>
<feature type="repeat" description="LRR 15">
    <location>
        <begin position="951"/>
        <end position="971"/>
    </location>
</feature>
<feature type="repeat" description="LRR 16">
    <location>
        <begin position="982"/>
        <end position="1004"/>
    </location>
</feature>
<feature type="repeat" description="LRR 17">
    <location>
        <begin position="1006"/>
        <end position="1027"/>
    </location>
</feature>
<feature type="repeat" description="LRR 18">
    <location>
        <begin position="1028"/>
        <end position="1048"/>
    </location>
</feature>
<feature type="repeat" description="LRR 19">
    <location>
        <begin position="1051"/>
        <end position="1073"/>
    </location>
</feature>
<feature type="repeat" description="LRR 20">
    <location>
        <begin position="1074"/>
        <end position="1096"/>
    </location>
</feature>
<feature type="repeat" description="LRR 21">
    <location>
        <begin position="1103"/>
        <end position="1124"/>
    </location>
</feature>
<feature type="repeat" description="LRR 22">
    <location>
        <begin position="1135"/>
        <end position="1160"/>
    </location>
</feature>
<feature type="domain" description="PPM-type phosphatase" evidence="5">
    <location>
        <begin position="1173"/>
        <end position="1439"/>
    </location>
</feature>
<feature type="domain" description="Guanylate cyclase" evidence="3">
    <location>
        <begin position="1483"/>
        <end position="1620"/>
    </location>
</feature>
<feature type="region of interest" description="Disordered" evidence="6">
    <location>
        <begin position="1"/>
        <end position="21"/>
    </location>
</feature>
<feature type="region of interest" description="Disordered" evidence="6">
    <location>
        <begin position="43"/>
        <end position="87"/>
    </location>
</feature>
<feature type="region of interest" description="Disordered" evidence="6">
    <location>
        <begin position="126"/>
        <end position="245"/>
    </location>
</feature>
<feature type="region of interest" description="Disordered" evidence="6">
    <location>
        <begin position="272"/>
        <end position="315"/>
    </location>
</feature>
<feature type="region of interest" description="Disordered" evidence="6">
    <location>
        <begin position="332"/>
        <end position="388"/>
    </location>
</feature>
<feature type="region of interest" description="Disordered" evidence="6">
    <location>
        <begin position="400"/>
        <end position="468"/>
    </location>
</feature>
<feature type="compositionally biased region" description="Polar residues" evidence="6">
    <location>
        <begin position="165"/>
        <end position="211"/>
    </location>
</feature>
<feature type="compositionally biased region" description="Low complexity" evidence="6">
    <location>
        <begin position="212"/>
        <end position="221"/>
    </location>
</feature>
<feature type="compositionally biased region" description="Basic and acidic residues" evidence="6">
    <location>
        <begin position="222"/>
        <end position="233"/>
    </location>
</feature>
<feature type="compositionally biased region" description="Basic residues" evidence="6">
    <location>
        <begin position="332"/>
        <end position="355"/>
    </location>
</feature>
<feature type="compositionally biased region" description="Basic and acidic residues" evidence="6">
    <location>
        <begin position="361"/>
        <end position="376"/>
    </location>
</feature>
<feature type="compositionally biased region" description="Low complexity" evidence="6">
    <location>
        <begin position="407"/>
        <end position="428"/>
    </location>
</feature>
<feature type="binding site" evidence="2">
    <location>
        <position position="1488"/>
    </location>
    <ligand>
        <name>Mg(2+)</name>
        <dbReference type="ChEBI" id="CHEBI:18420"/>
    </ligand>
</feature>
<feature type="binding site" evidence="2">
    <location>
        <position position="1531"/>
    </location>
    <ligand>
        <name>Mg(2+)</name>
        <dbReference type="ChEBI" id="CHEBI:18420"/>
    </ligand>
</feature>
<protein>
    <recommendedName>
        <fullName>Adenylate cyclase</fullName>
        <ecNumber>4.6.1.1</ecNumber>
    </recommendedName>
    <alternativeName>
        <fullName>ATP pyrophosphate-lyase</fullName>
    </alternativeName>
    <alternativeName>
        <fullName>Adenylyl cyclase</fullName>
    </alternativeName>
</protein>
<evidence type="ECO:0000250" key="1"/>
<evidence type="ECO:0000250" key="2">
    <source>
        <dbReference type="UniProtKB" id="Q99280"/>
    </source>
</evidence>
<evidence type="ECO:0000255" key="3">
    <source>
        <dbReference type="PROSITE-ProRule" id="PRU00099"/>
    </source>
</evidence>
<evidence type="ECO:0000255" key="4">
    <source>
        <dbReference type="PROSITE-ProRule" id="PRU00166"/>
    </source>
</evidence>
<evidence type="ECO:0000255" key="5">
    <source>
        <dbReference type="PROSITE-ProRule" id="PRU01082"/>
    </source>
</evidence>
<evidence type="ECO:0000256" key="6">
    <source>
        <dbReference type="SAM" id="MobiDB-lite"/>
    </source>
</evidence>
<evidence type="ECO:0000305" key="7"/>
<dbReference type="EC" id="4.6.1.1"/>
<dbReference type="EMBL" id="X56042">
    <property type="protein sequence ID" value="CAA39513.1"/>
    <property type="molecule type" value="Genomic_DNA"/>
</dbReference>
<dbReference type="PIR" id="JQ1145">
    <property type="entry name" value="OYBYK"/>
</dbReference>
<dbReference type="SMR" id="P23466"/>
<dbReference type="GO" id="GO:0005737">
    <property type="term" value="C:cytoplasm"/>
    <property type="evidence" value="ECO:0007669"/>
    <property type="project" value="TreeGrafter"/>
</dbReference>
<dbReference type="GO" id="GO:0004016">
    <property type="term" value="F:adenylate cyclase activity"/>
    <property type="evidence" value="ECO:0007669"/>
    <property type="project" value="UniProtKB-EC"/>
</dbReference>
<dbReference type="GO" id="GO:0005524">
    <property type="term" value="F:ATP binding"/>
    <property type="evidence" value="ECO:0007669"/>
    <property type="project" value="UniProtKB-KW"/>
</dbReference>
<dbReference type="GO" id="GO:0046872">
    <property type="term" value="F:metal ion binding"/>
    <property type="evidence" value="ECO:0007669"/>
    <property type="project" value="UniProtKB-KW"/>
</dbReference>
<dbReference type="GO" id="GO:0006171">
    <property type="term" value="P:cAMP biosynthetic process"/>
    <property type="evidence" value="ECO:0007669"/>
    <property type="project" value="UniProtKB-KW"/>
</dbReference>
<dbReference type="GO" id="GO:0035556">
    <property type="term" value="P:intracellular signal transduction"/>
    <property type="evidence" value="ECO:0007669"/>
    <property type="project" value="InterPro"/>
</dbReference>
<dbReference type="CDD" id="cd07302">
    <property type="entry name" value="CHD"/>
    <property type="match status" value="1"/>
</dbReference>
<dbReference type="CDD" id="cd00143">
    <property type="entry name" value="PP2Cc"/>
    <property type="match status" value="1"/>
</dbReference>
<dbReference type="FunFam" id="3.30.70.1230:FF:000084">
    <property type="entry name" value="Adenylate cyclase"/>
    <property type="match status" value="1"/>
</dbReference>
<dbReference type="Gene3D" id="3.30.70.1230">
    <property type="entry name" value="Nucleotide cyclase"/>
    <property type="match status" value="1"/>
</dbReference>
<dbReference type="Gene3D" id="3.60.40.10">
    <property type="entry name" value="PPM-type phosphatase domain"/>
    <property type="match status" value="1"/>
</dbReference>
<dbReference type="Gene3D" id="3.80.10.10">
    <property type="entry name" value="Ribonuclease Inhibitor"/>
    <property type="match status" value="4"/>
</dbReference>
<dbReference type="InterPro" id="IPR001054">
    <property type="entry name" value="A/G_cyclase"/>
</dbReference>
<dbReference type="InterPro" id="IPR048580">
    <property type="entry name" value="CYAA_C"/>
</dbReference>
<dbReference type="InterPro" id="IPR001611">
    <property type="entry name" value="Leu-rich_rpt"/>
</dbReference>
<dbReference type="InterPro" id="IPR025875">
    <property type="entry name" value="Leu-rich_rpt_4"/>
</dbReference>
<dbReference type="InterPro" id="IPR003591">
    <property type="entry name" value="Leu-rich_rpt_typical-subtyp"/>
</dbReference>
<dbReference type="InterPro" id="IPR032675">
    <property type="entry name" value="LRR_dom_sf"/>
</dbReference>
<dbReference type="InterPro" id="IPR050216">
    <property type="entry name" value="LRR_domain-containing"/>
</dbReference>
<dbReference type="InterPro" id="IPR029787">
    <property type="entry name" value="Nucleotide_cyclase"/>
</dbReference>
<dbReference type="InterPro" id="IPR036457">
    <property type="entry name" value="PPM-type-like_dom_sf"/>
</dbReference>
<dbReference type="InterPro" id="IPR001932">
    <property type="entry name" value="PPM-type_phosphatase-like_dom"/>
</dbReference>
<dbReference type="InterPro" id="IPR000159">
    <property type="entry name" value="RA_dom"/>
</dbReference>
<dbReference type="InterPro" id="IPR055071">
    <property type="entry name" value="RA_PHLPP-like"/>
</dbReference>
<dbReference type="PANTHER" id="PTHR48051">
    <property type="match status" value="1"/>
</dbReference>
<dbReference type="PANTHER" id="PTHR48051:SF1">
    <property type="entry name" value="RAS SUPPRESSOR PROTEIN 1"/>
    <property type="match status" value="1"/>
</dbReference>
<dbReference type="Pfam" id="PF21187">
    <property type="entry name" value="CYAA_C"/>
    <property type="match status" value="1"/>
</dbReference>
<dbReference type="Pfam" id="PF00211">
    <property type="entry name" value="Guanylate_cyc"/>
    <property type="match status" value="1"/>
</dbReference>
<dbReference type="Pfam" id="PF12799">
    <property type="entry name" value="LRR_4"/>
    <property type="match status" value="1"/>
</dbReference>
<dbReference type="Pfam" id="PF13855">
    <property type="entry name" value="LRR_8"/>
    <property type="match status" value="3"/>
</dbReference>
<dbReference type="Pfam" id="PF00481">
    <property type="entry name" value="PP2C"/>
    <property type="match status" value="1"/>
</dbReference>
<dbReference type="Pfam" id="PF23010">
    <property type="entry name" value="RA_3"/>
    <property type="match status" value="1"/>
</dbReference>
<dbReference type="SMART" id="SM00044">
    <property type="entry name" value="CYCc"/>
    <property type="match status" value="1"/>
</dbReference>
<dbReference type="SMART" id="SM00364">
    <property type="entry name" value="LRR_BAC"/>
    <property type="match status" value="9"/>
</dbReference>
<dbReference type="SMART" id="SM00369">
    <property type="entry name" value="LRR_TYP"/>
    <property type="match status" value="11"/>
</dbReference>
<dbReference type="SMART" id="SM00332">
    <property type="entry name" value="PP2Cc"/>
    <property type="match status" value="1"/>
</dbReference>
<dbReference type="SMART" id="SM00314">
    <property type="entry name" value="RA"/>
    <property type="match status" value="1"/>
</dbReference>
<dbReference type="SUPFAM" id="SSF52058">
    <property type="entry name" value="L domain-like"/>
    <property type="match status" value="1"/>
</dbReference>
<dbReference type="SUPFAM" id="SSF55073">
    <property type="entry name" value="Nucleotide cyclase"/>
    <property type="match status" value="1"/>
</dbReference>
<dbReference type="SUPFAM" id="SSF81606">
    <property type="entry name" value="PP2C-like"/>
    <property type="match status" value="1"/>
</dbReference>
<dbReference type="SUPFAM" id="SSF52047">
    <property type="entry name" value="RNI-like"/>
    <property type="match status" value="1"/>
</dbReference>
<dbReference type="PROSITE" id="PS50125">
    <property type="entry name" value="GUANYLATE_CYCLASE_2"/>
    <property type="match status" value="1"/>
</dbReference>
<dbReference type="PROSITE" id="PS51450">
    <property type="entry name" value="LRR"/>
    <property type="match status" value="18"/>
</dbReference>
<dbReference type="PROSITE" id="PS51746">
    <property type="entry name" value="PPM_2"/>
    <property type="match status" value="1"/>
</dbReference>
<dbReference type="PROSITE" id="PS50200">
    <property type="entry name" value="RA"/>
    <property type="match status" value="1"/>
</dbReference>
<reference key="1">
    <citation type="journal article" date="1991" name="Gene">
        <title>The adenylyl cyclase-encoding gene from Saccharomyces kluyveri.</title>
        <authorList>
            <person name="Young D."/>
            <person name="O'Neill K."/>
            <person name="Broek D."/>
            <person name="Wigler M."/>
        </authorList>
    </citation>
    <scope>NUCLEOTIDE SEQUENCE [GENOMIC DNA]</scope>
</reference>
<accession>P23466</accession>
<keyword id="KW-0067">ATP-binding</keyword>
<keyword id="KW-0115">cAMP biosynthesis</keyword>
<keyword id="KW-0433">Leucine-rich repeat</keyword>
<keyword id="KW-0456">Lyase</keyword>
<keyword id="KW-0460">Magnesium</keyword>
<keyword id="KW-0479">Metal-binding</keyword>
<keyword id="KW-0547">Nucleotide-binding</keyword>
<keyword id="KW-0677">Repeat</keyword>
<gene>
    <name type="primary">CYR1</name>
</gene>
<comment type="function">
    <text>Plays essential roles in regulation of cellular metabolism by catalyzing the synthesis of a second messenger, cAMP.</text>
</comment>
<comment type="catalytic activity">
    <reaction>
        <text>ATP = 3',5'-cyclic AMP + diphosphate</text>
        <dbReference type="Rhea" id="RHEA:15389"/>
        <dbReference type="ChEBI" id="CHEBI:30616"/>
        <dbReference type="ChEBI" id="CHEBI:33019"/>
        <dbReference type="ChEBI" id="CHEBI:58165"/>
        <dbReference type="EC" id="4.6.1.1"/>
    </reaction>
</comment>
<comment type="cofactor">
    <cofactor evidence="1">
        <name>Mg(2+)</name>
        <dbReference type="ChEBI" id="CHEBI:18420"/>
    </cofactor>
    <text evidence="1">Binds 1 Mg(2+) ion per subunit.</text>
</comment>
<comment type="similarity">
    <text evidence="7">Belongs to the adenylyl cyclase class-3 family.</text>
</comment>
<proteinExistence type="inferred from homology"/>
<organism>
    <name type="scientific">Lachancea kluyveri</name>
    <name type="common">Yeast</name>
    <name type="synonym">Saccharomyces kluyveri</name>
    <dbReference type="NCBI Taxonomy" id="4934"/>
    <lineage>
        <taxon>Eukaryota</taxon>
        <taxon>Fungi</taxon>
        <taxon>Dikarya</taxon>
        <taxon>Ascomycota</taxon>
        <taxon>Saccharomycotina</taxon>
        <taxon>Saccharomycetes</taxon>
        <taxon>Saccharomycetales</taxon>
        <taxon>Saccharomycetaceae</taxon>
        <taxon>Lachancea</taxon>
    </lineage>
</organism>